<comment type="function">
    <text evidence="1">Catalyzes the anti-1,4-elimination of the C-3 phosphate and the C-6 proR hydrogen from 5-enolpyruvylshikimate-3-phosphate (EPSP) to yield chorismate, which is the branch point compound that serves as the starting substrate for the three terminal pathways of aromatic amino acid biosynthesis. This reaction introduces a second double bond into the aromatic ring system.</text>
</comment>
<comment type="catalytic activity">
    <reaction evidence="1">
        <text>5-O-(1-carboxyvinyl)-3-phosphoshikimate = chorismate + phosphate</text>
        <dbReference type="Rhea" id="RHEA:21020"/>
        <dbReference type="ChEBI" id="CHEBI:29748"/>
        <dbReference type="ChEBI" id="CHEBI:43474"/>
        <dbReference type="ChEBI" id="CHEBI:57701"/>
        <dbReference type="EC" id="4.2.3.5"/>
    </reaction>
</comment>
<comment type="cofactor">
    <cofactor evidence="1">
        <name>FMNH2</name>
        <dbReference type="ChEBI" id="CHEBI:57618"/>
    </cofactor>
    <text evidence="1">Reduced FMN (FMNH(2)).</text>
</comment>
<comment type="pathway">
    <text evidence="1">Metabolic intermediate biosynthesis; chorismate biosynthesis; chorismate from D-erythrose 4-phosphate and phosphoenolpyruvate: step 7/7.</text>
</comment>
<comment type="subunit">
    <text evidence="1">Homotetramer.</text>
</comment>
<comment type="similarity">
    <text evidence="1">Belongs to the chorismate synthase family.</text>
</comment>
<reference key="1">
    <citation type="journal article" date="2011" name="MBio">
        <title>Novel metabolic attributes of the genus Cyanothece, comprising a group of unicellular nitrogen-fixing Cyanobacteria.</title>
        <authorList>
            <person name="Bandyopadhyay A."/>
            <person name="Elvitigala T."/>
            <person name="Welsh E."/>
            <person name="Stockel J."/>
            <person name="Liberton M."/>
            <person name="Min H."/>
            <person name="Sherman L.A."/>
            <person name="Pakrasi H.B."/>
        </authorList>
    </citation>
    <scope>NUCLEOTIDE SEQUENCE [LARGE SCALE GENOMIC DNA]</scope>
    <source>
        <strain>PCC 7424</strain>
    </source>
</reference>
<protein>
    <recommendedName>
        <fullName evidence="1">Chorismate synthase</fullName>
        <shortName evidence="1">CS</shortName>
        <ecNumber evidence="1">4.2.3.5</ecNumber>
    </recommendedName>
    <alternativeName>
        <fullName evidence="1">5-enolpyruvylshikimate-3-phosphate phospholyase</fullName>
    </alternativeName>
</protein>
<evidence type="ECO:0000255" key="1">
    <source>
        <dbReference type="HAMAP-Rule" id="MF_00300"/>
    </source>
</evidence>
<gene>
    <name evidence="1" type="primary">aroC</name>
    <name type="ordered locus">PCC7424_2355</name>
</gene>
<accession>B7KIU0</accession>
<feature type="chain" id="PRO_1000119485" description="Chorismate synthase">
    <location>
        <begin position="1"/>
        <end position="362"/>
    </location>
</feature>
<feature type="binding site" evidence="1">
    <location>
        <position position="47"/>
    </location>
    <ligand>
        <name>NADP(+)</name>
        <dbReference type="ChEBI" id="CHEBI:58349"/>
    </ligand>
</feature>
<feature type="binding site" evidence="1">
    <location>
        <begin position="124"/>
        <end position="126"/>
    </location>
    <ligand>
        <name>FMN</name>
        <dbReference type="ChEBI" id="CHEBI:58210"/>
    </ligand>
</feature>
<feature type="binding site" evidence="1">
    <location>
        <position position="286"/>
    </location>
    <ligand>
        <name>FMN</name>
        <dbReference type="ChEBI" id="CHEBI:58210"/>
    </ligand>
</feature>
<feature type="binding site" evidence="1">
    <location>
        <begin position="301"/>
        <end position="305"/>
    </location>
    <ligand>
        <name>FMN</name>
        <dbReference type="ChEBI" id="CHEBI:58210"/>
    </ligand>
</feature>
<feature type="binding site" evidence="1">
    <location>
        <position position="327"/>
    </location>
    <ligand>
        <name>FMN</name>
        <dbReference type="ChEBI" id="CHEBI:58210"/>
    </ligand>
</feature>
<proteinExistence type="inferred from homology"/>
<keyword id="KW-0028">Amino-acid biosynthesis</keyword>
<keyword id="KW-0057">Aromatic amino acid biosynthesis</keyword>
<keyword id="KW-0274">FAD</keyword>
<keyword id="KW-0285">Flavoprotein</keyword>
<keyword id="KW-0288">FMN</keyword>
<keyword id="KW-0456">Lyase</keyword>
<keyword id="KW-0521">NADP</keyword>
<keyword id="KW-1185">Reference proteome</keyword>
<name>AROC_GLOC7</name>
<sequence length="362" mass="39172">MGNIFGHLFRITTFGESHGGGVGVVIDGCPPRIEISETEIQLELDRRRPGQSKITTPRQESDTCEIISGVFEGKTLGTSIAILVRNKDARSQDYDEMALKYRPSHADATYDAKYGIRNWKGGGRSSARETIGRVAAGAIAKKILQQVAGVEIVAYVKRIKDLEAIINPETVTLEEVESNIVRCPDQDAAQKMIDLIDQTRREKDSIGGVVECVMRNVPKGLGEPVFDKLEADLAKGMMSLPATKGFEIGSGFAGTLLTGSEHNDEFYTDEAGNIRTVTNLSGGIQGGISNGENIIIRVAFKPTATIGKEQQTVTQTGEETTLAAKGRHDPCVLPRAVPMVEAMAALVLCDHLLRHHGQCKTV</sequence>
<dbReference type="EC" id="4.2.3.5" evidence="1"/>
<dbReference type="EMBL" id="CP001291">
    <property type="protein sequence ID" value="ACK70776.1"/>
    <property type="molecule type" value="Genomic_DNA"/>
</dbReference>
<dbReference type="RefSeq" id="WP_015954380.1">
    <property type="nucleotide sequence ID" value="NC_011729.1"/>
</dbReference>
<dbReference type="SMR" id="B7KIU0"/>
<dbReference type="STRING" id="65393.PCC7424_2355"/>
<dbReference type="KEGG" id="cyc:PCC7424_2355"/>
<dbReference type="eggNOG" id="COG0082">
    <property type="taxonomic scope" value="Bacteria"/>
</dbReference>
<dbReference type="HOGENOM" id="CLU_034547_0_1_3"/>
<dbReference type="OrthoDB" id="9771806at2"/>
<dbReference type="UniPathway" id="UPA00053">
    <property type="reaction ID" value="UER00090"/>
</dbReference>
<dbReference type="Proteomes" id="UP000002384">
    <property type="component" value="Chromosome"/>
</dbReference>
<dbReference type="GO" id="GO:0005829">
    <property type="term" value="C:cytosol"/>
    <property type="evidence" value="ECO:0007669"/>
    <property type="project" value="TreeGrafter"/>
</dbReference>
<dbReference type="GO" id="GO:0004107">
    <property type="term" value="F:chorismate synthase activity"/>
    <property type="evidence" value="ECO:0007669"/>
    <property type="project" value="UniProtKB-UniRule"/>
</dbReference>
<dbReference type="GO" id="GO:0010181">
    <property type="term" value="F:FMN binding"/>
    <property type="evidence" value="ECO:0007669"/>
    <property type="project" value="TreeGrafter"/>
</dbReference>
<dbReference type="GO" id="GO:0008652">
    <property type="term" value="P:amino acid biosynthetic process"/>
    <property type="evidence" value="ECO:0007669"/>
    <property type="project" value="UniProtKB-KW"/>
</dbReference>
<dbReference type="GO" id="GO:0009073">
    <property type="term" value="P:aromatic amino acid family biosynthetic process"/>
    <property type="evidence" value="ECO:0007669"/>
    <property type="project" value="UniProtKB-KW"/>
</dbReference>
<dbReference type="GO" id="GO:0009423">
    <property type="term" value="P:chorismate biosynthetic process"/>
    <property type="evidence" value="ECO:0007669"/>
    <property type="project" value="UniProtKB-UniRule"/>
</dbReference>
<dbReference type="CDD" id="cd07304">
    <property type="entry name" value="Chorismate_synthase"/>
    <property type="match status" value="1"/>
</dbReference>
<dbReference type="FunFam" id="3.60.150.10:FF:000003">
    <property type="entry name" value="Chorismate synthase"/>
    <property type="match status" value="1"/>
</dbReference>
<dbReference type="Gene3D" id="3.60.150.10">
    <property type="entry name" value="Chorismate synthase AroC"/>
    <property type="match status" value="1"/>
</dbReference>
<dbReference type="HAMAP" id="MF_00300">
    <property type="entry name" value="Chorismate_synth"/>
    <property type="match status" value="1"/>
</dbReference>
<dbReference type="InterPro" id="IPR000453">
    <property type="entry name" value="Chorismate_synth"/>
</dbReference>
<dbReference type="InterPro" id="IPR035904">
    <property type="entry name" value="Chorismate_synth_AroC_sf"/>
</dbReference>
<dbReference type="InterPro" id="IPR020541">
    <property type="entry name" value="Chorismate_synthase_CS"/>
</dbReference>
<dbReference type="NCBIfam" id="TIGR00033">
    <property type="entry name" value="aroC"/>
    <property type="match status" value="1"/>
</dbReference>
<dbReference type="NCBIfam" id="NF003793">
    <property type="entry name" value="PRK05382.1"/>
    <property type="match status" value="1"/>
</dbReference>
<dbReference type="PANTHER" id="PTHR21085">
    <property type="entry name" value="CHORISMATE SYNTHASE"/>
    <property type="match status" value="1"/>
</dbReference>
<dbReference type="PANTHER" id="PTHR21085:SF0">
    <property type="entry name" value="CHORISMATE SYNTHASE"/>
    <property type="match status" value="1"/>
</dbReference>
<dbReference type="Pfam" id="PF01264">
    <property type="entry name" value="Chorismate_synt"/>
    <property type="match status" value="1"/>
</dbReference>
<dbReference type="PIRSF" id="PIRSF001456">
    <property type="entry name" value="Chorismate_synth"/>
    <property type="match status" value="1"/>
</dbReference>
<dbReference type="SUPFAM" id="SSF103263">
    <property type="entry name" value="Chorismate synthase, AroC"/>
    <property type="match status" value="1"/>
</dbReference>
<dbReference type="PROSITE" id="PS00787">
    <property type="entry name" value="CHORISMATE_SYNTHASE_1"/>
    <property type="match status" value="1"/>
</dbReference>
<dbReference type="PROSITE" id="PS00788">
    <property type="entry name" value="CHORISMATE_SYNTHASE_2"/>
    <property type="match status" value="1"/>
</dbReference>
<dbReference type="PROSITE" id="PS00789">
    <property type="entry name" value="CHORISMATE_SYNTHASE_3"/>
    <property type="match status" value="1"/>
</dbReference>
<organism>
    <name type="scientific">Gloeothece citriformis (strain PCC 7424)</name>
    <name type="common">Cyanothece sp. (strain PCC 7424)</name>
    <dbReference type="NCBI Taxonomy" id="65393"/>
    <lineage>
        <taxon>Bacteria</taxon>
        <taxon>Bacillati</taxon>
        <taxon>Cyanobacteriota</taxon>
        <taxon>Cyanophyceae</taxon>
        <taxon>Oscillatoriophycideae</taxon>
        <taxon>Chroococcales</taxon>
        <taxon>Aphanothecaceae</taxon>
        <taxon>Gloeothece</taxon>
        <taxon>Gloeothece citriformis</taxon>
    </lineage>
</organism>